<feature type="chain" id="PRO_1000186866" description="LL-diaminopimelate aminotransferase">
    <location>
        <begin position="1"/>
        <end position="389"/>
    </location>
</feature>
<feature type="binding site" evidence="1">
    <location>
        <position position="16"/>
    </location>
    <ligand>
        <name>substrate</name>
    </ligand>
</feature>
<feature type="binding site" evidence="1">
    <location>
        <position position="41"/>
    </location>
    <ligand>
        <name>substrate</name>
    </ligand>
</feature>
<feature type="binding site" evidence="1">
    <location>
        <position position="70"/>
    </location>
    <ligand>
        <name>pyridoxal 5'-phosphate</name>
        <dbReference type="ChEBI" id="CHEBI:597326"/>
    </ligand>
</feature>
<feature type="binding site" evidence="1">
    <location>
        <begin position="104"/>
        <end position="105"/>
    </location>
    <ligand>
        <name>pyridoxal 5'-phosphate</name>
        <dbReference type="ChEBI" id="CHEBI:597326"/>
    </ligand>
</feature>
<feature type="binding site" evidence="1">
    <location>
        <position position="105"/>
    </location>
    <ligand>
        <name>substrate</name>
    </ligand>
</feature>
<feature type="binding site" evidence="1">
    <location>
        <position position="129"/>
    </location>
    <ligand>
        <name>pyridoxal 5'-phosphate</name>
        <dbReference type="ChEBI" id="CHEBI:597326"/>
    </ligand>
</feature>
<feature type="binding site" evidence="1">
    <location>
        <position position="129"/>
    </location>
    <ligand>
        <name>substrate</name>
    </ligand>
</feature>
<feature type="binding site" evidence="1">
    <location>
        <position position="179"/>
    </location>
    <ligand>
        <name>pyridoxal 5'-phosphate</name>
        <dbReference type="ChEBI" id="CHEBI:597326"/>
    </ligand>
</feature>
<feature type="binding site" evidence="1">
    <location>
        <position position="179"/>
    </location>
    <ligand>
        <name>substrate</name>
    </ligand>
</feature>
<feature type="binding site" evidence="1">
    <location>
        <position position="210"/>
    </location>
    <ligand>
        <name>pyridoxal 5'-phosphate</name>
        <dbReference type="ChEBI" id="CHEBI:597326"/>
    </ligand>
</feature>
<feature type="binding site" evidence="1">
    <location>
        <begin position="239"/>
        <end position="241"/>
    </location>
    <ligand>
        <name>pyridoxal 5'-phosphate</name>
        <dbReference type="ChEBI" id="CHEBI:597326"/>
    </ligand>
</feature>
<feature type="binding site" evidence="1">
    <location>
        <position position="250"/>
    </location>
    <ligand>
        <name>pyridoxal 5'-phosphate</name>
        <dbReference type="ChEBI" id="CHEBI:597326"/>
    </ligand>
</feature>
<feature type="binding site" evidence="1">
    <location>
        <position position="369"/>
    </location>
    <ligand>
        <name>substrate</name>
    </ligand>
</feature>
<feature type="modified residue" description="N6-(pyridoxal phosphate)lysine" evidence="1">
    <location>
        <position position="242"/>
    </location>
</feature>
<comment type="function">
    <text evidence="1">Involved in the synthesis of meso-diaminopimelate (m-DAP or DL-DAP), required for both lysine and peptidoglycan biosynthesis. Catalyzes the direct conversion of tetrahydrodipicolinate to LL-diaminopimelate.</text>
</comment>
<comment type="catalytic activity">
    <reaction evidence="1">
        <text>(2S,6S)-2,6-diaminopimelate + 2-oxoglutarate = (S)-2,3,4,5-tetrahydrodipicolinate + L-glutamate + H2O + H(+)</text>
        <dbReference type="Rhea" id="RHEA:23988"/>
        <dbReference type="ChEBI" id="CHEBI:15377"/>
        <dbReference type="ChEBI" id="CHEBI:15378"/>
        <dbReference type="ChEBI" id="CHEBI:16810"/>
        <dbReference type="ChEBI" id="CHEBI:16845"/>
        <dbReference type="ChEBI" id="CHEBI:29985"/>
        <dbReference type="ChEBI" id="CHEBI:57609"/>
        <dbReference type="EC" id="2.6.1.83"/>
    </reaction>
</comment>
<comment type="cofactor">
    <cofactor evidence="1">
        <name>pyridoxal 5'-phosphate</name>
        <dbReference type="ChEBI" id="CHEBI:597326"/>
    </cofactor>
</comment>
<comment type="pathway">
    <text evidence="1">Amino-acid biosynthesis; L-lysine biosynthesis via DAP pathway; LL-2,6-diaminopimelate from (S)-tetrahydrodipicolinate (aminotransferase route): step 1/1.</text>
</comment>
<comment type="subunit">
    <text evidence="1">Homodimer.</text>
</comment>
<comment type="similarity">
    <text evidence="1">Belongs to the class-I pyridoxal-phosphate-dependent aminotransferase family. LL-diaminopimelate aminotransferase subfamily.</text>
</comment>
<proteinExistence type="inferred from homology"/>
<accession>B8DJJ6</accession>
<keyword id="KW-0032">Aminotransferase</keyword>
<keyword id="KW-0663">Pyridoxal phosphate</keyword>
<keyword id="KW-0808">Transferase</keyword>
<evidence type="ECO:0000255" key="1">
    <source>
        <dbReference type="HAMAP-Rule" id="MF_01642"/>
    </source>
</evidence>
<reference key="1">
    <citation type="submission" date="2008-10" db="EMBL/GenBank/DDBJ databases">
        <title>Complete sequence of Desulfovibrio vulgaris str. 'Miyazaki F'.</title>
        <authorList>
            <person name="Lucas S."/>
            <person name="Copeland A."/>
            <person name="Lapidus A."/>
            <person name="Glavina del Rio T."/>
            <person name="Dalin E."/>
            <person name="Tice H."/>
            <person name="Bruce D."/>
            <person name="Goodwin L."/>
            <person name="Pitluck S."/>
            <person name="Sims D."/>
            <person name="Brettin T."/>
            <person name="Detter J.C."/>
            <person name="Han C."/>
            <person name="Larimer F."/>
            <person name="Land M."/>
            <person name="Hauser L."/>
            <person name="Kyrpides N."/>
            <person name="Mikhailova N."/>
            <person name="Hazen T.C."/>
            <person name="Richardson P."/>
        </authorList>
    </citation>
    <scope>NUCLEOTIDE SEQUENCE [LARGE SCALE GENOMIC DNA]</scope>
    <source>
        <strain>DSM 19637 / Miyazaki F</strain>
    </source>
</reference>
<gene>
    <name evidence="1" type="primary">dapL</name>
    <name type="ordered locus">DvMF_0361</name>
</gene>
<protein>
    <recommendedName>
        <fullName evidence="1">LL-diaminopimelate aminotransferase</fullName>
        <shortName evidence="1">DAP-AT</shortName>
        <shortName evidence="1">DAP-aminotransferase</shortName>
        <shortName evidence="1">LL-DAP-aminotransferase</shortName>
        <ecNumber evidence="1">2.6.1.83</ecNumber>
    </recommendedName>
</protein>
<sequence length="389" mass="42564">MADFKLADRLATLPPYLFAGIDKVKAEVAARGVDIISLGIGDPDMPTPDFIIEAMKKAVERPANHQYPSYVGMLEFRQEVANWYGRRFGVSLDPKTEVIGLIGSKEGIAHFPLAFVNPGDLVLVCTPNYPVYHIATGFVGGEVQFIPLVEENDYLPDLDAIPAATWDRAKMIFVNYPNNPTAATAPRAFYEKLIGICRKHNVIIAHDTAYTEVYYDENDKPMSILEVEGAKDVTIEFHSLSKTYNMTGWRVGMAVGNASLVAGLGKVKENVDSGIFQAVQEASIVALRDGDDFCRELRGIYRKRRDVVVAALNKVGIACRVPTAAFYIWAKVPAGYGSSAEFVTAVLEKTGVVLTPGNGFGTPGEGYFRISLTVDTDRLEEAVSRIANL</sequence>
<organism>
    <name type="scientific">Nitratidesulfovibrio vulgaris (strain DSM 19637 / Miyazaki F)</name>
    <name type="common">Desulfovibrio vulgaris</name>
    <dbReference type="NCBI Taxonomy" id="883"/>
    <lineage>
        <taxon>Bacteria</taxon>
        <taxon>Pseudomonadati</taxon>
        <taxon>Thermodesulfobacteriota</taxon>
        <taxon>Desulfovibrionia</taxon>
        <taxon>Desulfovibrionales</taxon>
        <taxon>Desulfovibrionaceae</taxon>
        <taxon>Nitratidesulfovibrio</taxon>
    </lineage>
</organism>
<name>DAPAT_NITV9</name>
<dbReference type="EC" id="2.6.1.83" evidence="1"/>
<dbReference type="EMBL" id="CP001197">
    <property type="protein sequence ID" value="ACL07318.1"/>
    <property type="molecule type" value="Genomic_DNA"/>
</dbReference>
<dbReference type="SMR" id="B8DJJ6"/>
<dbReference type="STRING" id="883.DvMF_0361"/>
<dbReference type="KEGG" id="dvm:DvMF_0361"/>
<dbReference type="eggNOG" id="COG0436">
    <property type="taxonomic scope" value="Bacteria"/>
</dbReference>
<dbReference type="HOGENOM" id="CLU_017584_4_5_7"/>
<dbReference type="OrthoDB" id="9804474at2"/>
<dbReference type="UniPathway" id="UPA00034">
    <property type="reaction ID" value="UER00466"/>
</dbReference>
<dbReference type="GO" id="GO:0010285">
    <property type="term" value="F:L,L-diaminopimelate aminotransferase activity"/>
    <property type="evidence" value="ECO:0007669"/>
    <property type="project" value="UniProtKB-EC"/>
</dbReference>
<dbReference type="GO" id="GO:0030170">
    <property type="term" value="F:pyridoxal phosphate binding"/>
    <property type="evidence" value="ECO:0007669"/>
    <property type="project" value="InterPro"/>
</dbReference>
<dbReference type="GO" id="GO:0009089">
    <property type="term" value="P:lysine biosynthetic process via diaminopimelate"/>
    <property type="evidence" value="ECO:0007669"/>
    <property type="project" value="UniProtKB-UniPathway"/>
</dbReference>
<dbReference type="CDD" id="cd00609">
    <property type="entry name" value="AAT_like"/>
    <property type="match status" value="1"/>
</dbReference>
<dbReference type="Gene3D" id="3.90.1150.10">
    <property type="entry name" value="Aspartate Aminotransferase, domain 1"/>
    <property type="match status" value="1"/>
</dbReference>
<dbReference type="Gene3D" id="3.40.640.10">
    <property type="entry name" value="Type I PLP-dependent aspartate aminotransferase-like (Major domain)"/>
    <property type="match status" value="1"/>
</dbReference>
<dbReference type="HAMAP" id="MF_01642">
    <property type="entry name" value="DapL_aminotrans_1"/>
    <property type="match status" value="1"/>
</dbReference>
<dbReference type="InterPro" id="IPR004839">
    <property type="entry name" value="Aminotransferase_I/II_large"/>
</dbReference>
<dbReference type="InterPro" id="IPR019881">
    <property type="entry name" value="DAP-NH2Trfase_DapL_Desulfo"/>
</dbReference>
<dbReference type="InterPro" id="IPR019942">
    <property type="entry name" value="DapL/ALD1"/>
</dbReference>
<dbReference type="InterPro" id="IPR050881">
    <property type="entry name" value="LL-DAP_aminotransferase"/>
</dbReference>
<dbReference type="InterPro" id="IPR004838">
    <property type="entry name" value="NHTrfase_class1_PyrdxlP-BS"/>
</dbReference>
<dbReference type="InterPro" id="IPR015424">
    <property type="entry name" value="PyrdxlP-dep_Trfase"/>
</dbReference>
<dbReference type="InterPro" id="IPR015421">
    <property type="entry name" value="PyrdxlP-dep_Trfase_major"/>
</dbReference>
<dbReference type="InterPro" id="IPR015422">
    <property type="entry name" value="PyrdxlP-dep_Trfase_small"/>
</dbReference>
<dbReference type="NCBIfam" id="TIGR03540">
    <property type="entry name" value="DapC_direct"/>
    <property type="match status" value="1"/>
</dbReference>
<dbReference type="NCBIfam" id="NF006756">
    <property type="entry name" value="PRK09276.1"/>
    <property type="match status" value="1"/>
</dbReference>
<dbReference type="PANTHER" id="PTHR42832">
    <property type="entry name" value="AMINO ACID AMINOTRANSFERASE"/>
    <property type="match status" value="1"/>
</dbReference>
<dbReference type="PANTHER" id="PTHR42832:SF3">
    <property type="entry name" value="L-GLUTAMINE--4-(METHYLSULFANYL)-2-OXOBUTANOATE AMINOTRANSFERASE"/>
    <property type="match status" value="1"/>
</dbReference>
<dbReference type="Pfam" id="PF00155">
    <property type="entry name" value="Aminotran_1_2"/>
    <property type="match status" value="1"/>
</dbReference>
<dbReference type="SUPFAM" id="SSF53383">
    <property type="entry name" value="PLP-dependent transferases"/>
    <property type="match status" value="1"/>
</dbReference>
<dbReference type="PROSITE" id="PS00105">
    <property type="entry name" value="AA_TRANSFER_CLASS_1"/>
    <property type="match status" value="1"/>
</dbReference>